<feature type="chain" id="PRO_1000076585" description="Phosphoglycerate kinase">
    <location>
        <begin position="1"/>
        <end position="398"/>
    </location>
</feature>
<feature type="binding site" evidence="1">
    <location>
        <begin position="23"/>
        <end position="25"/>
    </location>
    <ligand>
        <name>substrate</name>
    </ligand>
</feature>
<feature type="binding site" evidence="1">
    <location>
        <position position="38"/>
    </location>
    <ligand>
        <name>substrate</name>
    </ligand>
</feature>
<feature type="binding site" evidence="1">
    <location>
        <begin position="61"/>
        <end position="64"/>
    </location>
    <ligand>
        <name>substrate</name>
    </ligand>
</feature>
<feature type="binding site" evidence="1">
    <location>
        <position position="122"/>
    </location>
    <ligand>
        <name>substrate</name>
    </ligand>
</feature>
<feature type="binding site" evidence="1">
    <location>
        <position position="155"/>
    </location>
    <ligand>
        <name>substrate</name>
    </ligand>
</feature>
<feature type="binding site" evidence="1">
    <location>
        <position position="206"/>
    </location>
    <ligand>
        <name>ATP</name>
        <dbReference type="ChEBI" id="CHEBI:30616"/>
    </ligand>
</feature>
<feature type="binding site" evidence="1">
    <location>
        <position position="297"/>
    </location>
    <ligand>
        <name>ATP</name>
        <dbReference type="ChEBI" id="CHEBI:30616"/>
    </ligand>
</feature>
<feature type="binding site" evidence="1">
    <location>
        <position position="328"/>
    </location>
    <ligand>
        <name>ATP</name>
        <dbReference type="ChEBI" id="CHEBI:30616"/>
    </ligand>
</feature>
<feature type="binding site" evidence="1">
    <location>
        <begin position="354"/>
        <end position="357"/>
    </location>
    <ligand>
        <name>ATP</name>
        <dbReference type="ChEBI" id="CHEBI:30616"/>
    </ligand>
</feature>
<reference key="1">
    <citation type="journal article" date="2008" name="Proc. Natl. Acad. Sci. U.S.A.">
        <title>The genome of Clostridium kluyveri, a strict anaerobe with unique metabolic features.</title>
        <authorList>
            <person name="Seedorf H."/>
            <person name="Fricke W.F."/>
            <person name="Veith B."/>
            <person name="Brueggemann H."/>
            <person name="Liesegang H."/>
            <person name="Strittmatter A."/>
            <person name="Miethke M."/>
            <person name="Buckel W."/>
            <person name="Hinderberger J."/>
            <person name="Li F."/>
            <person name="Hagemeier C."/>
            <person name="Thauer R.K."/>
            <person name="Gottschalk G."/>
        </authorList>
    </citation>
    <scope>NUCLEOTIDE SEQUENCE [LARGE SCALE GENOMIC DNA]</scope>
    <source>
        <strain>ATCC 8527 / DSM 555 / NBRC 12016 / NCIMB 10680 / K1</strain>
    </source>
</reference>
<gene>
    <name evidence="1" type="primary">pgk</name>
    <name type="ordered locus">CKL_3381</name>
</gene>
<protein>
    <recommendedName>
        <fullName evidence="1">Phosphoglycerate kinase</fullName>
        <ecNumber evidence="1">2.7.2.3</ecNumber>
    </recommendedName>
</protein>
<comment type="catalytic activity">
    <reaction evidence="1">
        <text>(2R)-3-phosphoglycerate + ATP = (2R)-3-phospho-glyceroyl phosphate + ADP</text>
        <dbReference type="Rhea" id="RHEA:14801"/>
        <dbReference type="ChEBI" id="CHEBI:30616"/>
        <dbReference type="ChEBI" id="CHEBI:57604"/>
        <dbReference type="ChEBI" id="CHEBI:58272"/>
        <dbReference type="ChEBI" id="CHEBI:456216"/>
        <dbReference type="EC" id="2.7.2.3"/>
    </reaction>
</comment>
<comment type="pathway">
    <text evidence="1">Carbohydrate degradation; glycolysis; pyruvate from D-glyceraldehyde 3-phosphate: step 2/5.</text>
</comment>
<comment type="subunit">
    <text evidence="1">Monomer.</text>
</comment>
<comment type="subcellular location">
    <subcellularLocation>
        <location evidence="1">Cytoplasm</location>
    </subcellularLocation>
</comment>
<comment type="similarity">
    <text evidence="1">Belongs to the phosphoglycerate kinase family.</text>
</comment>
<organism>
    <name type="scientific">Clostridium kluyveri (strain ATCC 8527 / DSM 555 / NBRC 12016 / NCIMB 10680 / K1)</name>
    <dbReference type="NCBI Taxonomy" id="431943"/>
    <lineage>
        <taxon>Bacteria</taxon>
        <taxon>Bacillati</taxon>
        <taxon>Bacillota</taxon>
        <taxon>Clostridia</taxon>
        <taxon>Eubacteriales</taxon>
        <taxon>Clostridiaceae</taxon>
        <taxon>Clostridium</taxon>
    </lineage>
</organism>
<sequence length="398" mass="43173">MVFNKKTIEDVDVKGKRVLVRCDFNVPLQEGKITDENRLIGSLPTIKYLMENNAKVILCSHLGKPKGEVKPEMSLLPVAKRLSELLKKEVVFAADDNVVGENAKAAVKNMKDGDVILLQNTRYRIEETKNQDNFSKELASLGEIFVNDAFGTAHRAHCSTVGVTKFLPTAVCGYLIQKELEFLGNAIENPSRPFTAILGGVKVSDKINVINNLLEKVDTLIIGGGMSYTFARAQGYTIGTSVVEEDKIEYAKEMIDKAKEKGIKLLLPIDRVVTDKFDESAEPILEDDKNIKDGYMGMDIGPKTAKVYADAIKDSKTIIWNGPMGVFEFKNFAKGTFAVAKAMAESGAITIIGGGDSAAAINQLGFGDKMTHISTGGGASLEFLGGEELPGISALNNK</sequence>
<dbReference type="EC" id="2.7.2.3" evidence="1"/>
<dbReference type="EMBL" id="CP000673">
    <property type="protein sequence ID" value="EDK35384.1"/>
    <property type="molecule type" value="Genomic_DNA"/>
</dbReference>
<dbReference type="RefSeq" id="WP_012103714.1">
    <property type="nucleotide sequence ID" value="NC_009706.1"/>
</dbReference>
<dbReference type="SMR" id="A5N2N8"/>
<dbReference type="STRING" id="431943.CKL_3381"/>
<dbReference type="KEGG" id="ckl:CKL_3381"/>
<dbReference type="eggNOG" id="COG0126">
    <property type="taxonomic scope" value="Bacteria"/>
</dbReference>
<dbReference type="HOGENOM" id="CLU_025427_0_2_9"/>
<dbReference type="UniPathway" id="UPA00109">
    <property type="reaction ID" value="UER00185"/>
</dbReference>
<dbReference type="Proteomes" id="UP000002411">
    <property type="component" value="Chromosome"/>
</dbReference>
<dbReference type="GO" id="GO:0005829">
    <property type="term" value="C:cytosol"/>
    <property type="evidence" value="ECO:0007669"/>
    <property type="project" value="TreeGrafter"/>
</dbReference>
<dbReference type="GO" id="GO:0043531">
    <property type="term" value="F:ADP binding"/>
    <property type="evidence" value="ECO:0007669"/>
    <property type="project" value="TreeGrafter"/>
</dbReference>
<dbReference type="GO" id="GO:0005524">
    <property type="term" value="F:ATP binding"/>
    <property type="evidence" value="ECO:0007669"/>
    <property type="project" value="UniProtKB-KW"/>
</dbReference>
<dbReference type="GO" id="GO:0004618">
    <property type="term" value="F:phosphoglycerate kinase activity"/>
    <property type="evidence" value="ECO:0007669"/>
    <property type="project" value="UniProtKB-UniRule"/>
</dbReference>
<dbReference type="GO" id="GO:0006094">
    <property type="term" value="P:gluconeogenesis"/>
    <property type="evidence" value="ECO:0007669"/>
    <property type="project" value="TreeGrafter"/>
</dbReference>
<dbReference type="GO" id="GO:0006096">
    <property type="term" value="P:glycolytic process"/>
    <property type="evidence" value="ECO:0007669"/>
    <property type="project" value="UniProtKB-UniRule"/>
</dbReference>
<dbReference type="CDD" id="cd00318">
    <property type="entry name" value="Phosphoglycerate_kinase"/>
    <property type="match status" value="1"/>
</dbReference>
<dbReference type="FunFam" id="3.40.50.1260:FF:000007">
    <property type="entry name" value="Phosphoglycerate kinase"/>
    <property type="match status" value="1"/>
</dbReference>
<dbReference type="FunFam" id="3.40.50.1260:FF:000008">
    <property type="entry name" value="Phosphoglycerate kinase"/>
    <property type="match status" value="1"/>
</dbReference>
<dbReference type="Gene3D" id="3.40.50.1260">
    <property type="entry name" value="Phosphoglycerate kinase, N-terminal domain"/>
    <property type="match status" value="2"/>
</dbReference>
<dbReference type="HAMAP" id="MF_00145">
    <property type="entry name" value="Phosphoglyc_kinase"/>
    <property type="match status" value="1"/>
</dbReference>
<dbReference type="InterPro" id="IPR001576">
    <property type="entry name" value="Phosphoglycerate_kinase"/>
</dbReference>
<dbReference type="InterPro" id="IPR015911">
    <property type="entry name" value="Phosphoglycerate_kinase_CS"/>
</dbReference>
<dbReference type="InterPro" id="IPR015824">
    <property type="entry name" value="Phosphoglycerate_kinase_N"/>
</dbReference>
<dbReference type="InterPro" id="IPR036043">
    <property type="entry name" value="Phosphoglycerate_kinase_sf"/>
</dbReference>
<dbReference type="PANTHER" id="PTHR11406">
    <property type="entry name" value="PHOSPHOGLYCERATE KINASE"/>
    <property type="match status" value="1"/>
</dbReference>
<dbReference type="PANTHER" id="PTHR11406:SF23">
    <property type="entry name" value="PHOSPHOGLYCERATE KINASE 1, CHLOROPLASTIC-RELATED"/>
    <property type="match status" value="1"/>
</dbReference>
<dbReference type="Pfam" id="PF00162">
    <property type="entry name" value="PGK"/>
    <property type="match status" value="1"/>
</dbReference>
<dbReference type="PIRSF" id="PIRSF000724">
    <property type="entry name" value="Pgk"/>
    <property type="match status" value="1"/>
</dbReference>
<dbReference type="PRINTS" id="PR00477">
    <property type="entry name" value="PHGLYCKINASE"/>
</dbReference>
<dbReference type="SUPFAM" id="SSF53748">
    <property type="entry name" value="Phosphoglycerate kinase"/>
    <property type="match status" value="1"/>
</dbReference>
<dbReference type="PROSITE" id="PS00111">
    <property type="entry name" value="PGLYCERATE_KINASE"/>
    <property type="match status" value="1"/>
</dbReference>
<accession>A5N2N8</accession>
<evidence type="ECO:0000255" key="1">
    <source>
        <dbReference type="HAMAP-Rule" id="MF_00145"/>
    </source>
</evidence>
<keyword id="KW-0067">ATP-binding</keyword>
<keyword id="KW-0963">Cytoplasm</keyword>
<keyword id="KW-0324">Glycolysis</keyword>
<keyword id="KW-0418">Kinase</keyword>
<keyword id="KW-0547">Nucleotide-binding</keyword>
<keyword id="KW-1185">Reference proteome</keyword>
<keyword id="KW-0808">Transferase</keyword>
<name>PGK_CLOK5</name>
<proteinExistence type="inferred from homology"/>